<protein>
    <recommendedName>
        <fullName evidence="1">Elongation factor P</fullName>
        <shortName evidence="1">EF-P</shortName>
    </recommendedName>
</protein>
<evidence type="ECO:0000255" key="1">
    <source>
        <dbReference type="HAMAP-Rule" id="MF_00141"/>
    </source>
</evidence>
<reference key="1">
    <citation type="submission" date="2006-11" db="EMBL/GenBank/DDBJ databases">
        <title>Identification and characterization of a new conjugation/ type IVA secretion system (trb/tra) of L. pneumophila Corby localized on a mobile genomic island.</title>
        <authorList>
            <person name="Gloeckner G."/>
            <person name="Albert-Weissenberger C."/>
            <person name="Weinmann E."/>
            <person name="Jacobi S."/>
            <person name="Schunder E."/>
            <person name="Steinert M."/>
            <person name="Buchrieser C."/>
            <person name="Hacker J."/>
            <person name="Heuner K."/>
        </authorList>
    </citation>
    <scope>NUCLEOTIDE SEQUENCE [LARGE SCALE GENOMIC DNA]</scope>
    <source>
        <strain>Corby</strain>
    </source>
</reference>
<dbReference type="EMBL" id="CP000675">
    <property type="protein sequence ID" value="ABQ54361.1"/>
    <property type="molecule type" value="Genomic_DNA"/>
</dbReference>
<dbReference type="RefSeq" id="WP_011212988.1">
    <property type="nucleotide sequence ID" value="NZ_JAPMSS010000003.1"/>
</dbReference>
<dbReference type="SMR" id="A5IAG1"/>
<dbReference type="KEGG" id="lpc:LPC_0366"/>
<dbReference type="HOGENOM" id="CLU_074944_0_0_6"/>
<dbReference type="UniPathway" id="UPA00345"/>
<dbReference type="GO" id="GO:0005737">
    <property type="term" value="C:cytoplasm"/>
    <property type="evidence" value="ECO:0007669"/>
    <property type="project" value="UniProtKB-SubCell"/>
</dbReference>
<dbReference type="GO" id="GO:0003746">
    <property type="term" value="F:translation elongation factor activity"/>
    <property type="evidence" value="ECO:0007669"/>
    <property type="project" value="UniProtKB-UniRule"/>
</dbReference>
<dbReference type="GO" id="GO:0043043">
    <property type="term" value="P:peptide biosynthetic process"/>
    <property type="evidence" value="ECO:0007669"/>
    <property type="project" value="InterPro"/>
</dbReference>
<dbReference type="CDD" id="cd04470">
    <property type="entry name" value="S1_EF-P_repeat_1"/>
    <property type="match status" value="1"/>
</dbReference>
<dbReference type="CDD" id="cd05794">
    <property type="entry name" value="S1_EF-P_repeat_2"/>
    <property type="match status" value="1"/>
</dbReference>
<dbReference type="FunFam" id="2.30.30.30:FF:000003">
    <property type="entry name" value="Elongation factor P"/>
    <property type="match status" value="1"/>
</dbReference>
<dbReference type="FunFam" id="2.40.50.140:FF:000004">
    <property type="entry name" value="Elongation factor P"/>
    <property type="match status" value="1"/>
</dbReference>
<dbReference type="FunFam" id="2.40.50.140:FF:000009">
    <property type="entry name" value="Elongation factor P"/>
    <property type="match status" value="1"/>
</dbReference>
<dbReference type="Gene3D" id="2.30.30.30">
    <property type="match status" value="1"/>
</dbReference>
<dbReference type="Gene3D" id="2.40.50.140">
    <property type="entry name" value="Nucleic acid-binding proteins"/>
    <property type="match status" value="2"/>
</dbReference>
<dbReference type="HAMAP" id="MF_00141">
    <property type="entry name" value="EF_P"/>
    <property type="match status" value="1"/>
</dbReference>
<dbReference type="InterPro" id="IPR015365">
    <property type="entry name" value="Elong-fact-P_C"/>
</dbReference>
<dbReference type="InterPro" id="IPR012340">
    <property type="entry name" value="NA-bd_OB-fold"/>
</dbReference>
<dbReference type="InterPro" id="IPR014722">
    <property type="entry name" value="Rib_uL2_dom2"/>
</dbReference>
<dbReference type="InterPro" id="IPR020599">
    <property type="entry name" value="Transl_elong_fac_P/YeiP"/>
</dbReference>
<dbReference type="InterPro" id="IPR013185">
    <property type="entry name" value="Transl_elong_KOW-like"/>
</dbReference>
<dbReference type="InterPro" id="IPR001059">
    <property type="entry name" value="Transl_elong_P/YeiP_cen"/>
</dbReference>
<dbReference type="InterPro" id="IPR013852">
    <property type="entry name" value="Transl_elong_P/YeiP_CS"/>
</dbReference>
<dbReference type="InterPro" id="IPR011768">
    <property type="entry name" value="Transl_elongation_fac_P"/>
</dbReference>
<dbReference type="InterPro" id="IPR008991">
    <property type="entry name" value="Translation_prot_SH3-like_sf"/>
</dbReference>
<dbReference type="NCBIfam" id="TIGR00038">
    <property type="entry name" value="efp"/>
    <property type="match status" value="1"/>
</dbReference>
<dbReference type="NCBIfam" id="NF001810">
    <property type="entry name" value="PRK00529.1"/>
    <property type="match status" value="1"/>
</dbReference>
<dbReference type="PANTHER" id="PTHR30053">
    <property type="entry name" value="ELONGATION FACTOR P"/>
    <property type="match status" value="1"/>
</dbReference>
<dbReference type="PANTHER" id="PTHR30053:SF12">
    <property type="entry name" value="ELONGATION FACTOR P (EF-P) FAMILY PROTEIN"/>
    <property type="match status" value="1"/>
</dbReference>
<dbReference type="Pfam" id="PF01132">
    <property type="entry name" value="EFP"/>
    <property type="match status" value="1"/>
</dbReference>
<dbReference type="Pfam" id="PF08207">
    <property type="entry name" value="EFP_N"/>
    <property type="match status" value="1"/>
</dbReference>
<dbReference type="Pfam" id="PF09285">
    <property type="entry name" value="Elong-fact-P_C"/>
    <property type="match status" value="1"/>
</dbReference>
<dbReference type="PIRSF" id="PIRSF005901">
    <property type="entry name" value="EF-P"/>
    <property type="match status" value="1"/>
</dbReference>
<dbReference type="SMART" id="SM01185">
    <property type="entry name" value="EFP"/>
    <property type="match status" value="1"/>
</dbReference>
<dbReference type="SMART" id="SM00841">
    <property type="entry name" value="Elong-fact-P_C"/>
    <property type="match status" value="1"/>
</dbReference>
<dbReference type="SUPFAM" id="SSF50249">
    <property type="entry name" value="Nucleic acid-binding proteins"/>
    <property type="match status" value="2"/>
</dbReference>
<dbReference type="SUPFAM" id="SSF50104">
    <property type="entry name" value="Translation proteins SH3-like domain"/>
    <property type="match status" value="1"/>
</dbReference>
<dbReference type="PROSITE" id="PS01275">
    <property type="entry name" value="EFP"/>
    <property type="match status" value="1"/>
</dbReference>
<gene>
    <name evidence="1" type="primary">efp</name>
    <name type="ordered locus">LPC_0366</name>
</gene>
<feature type="chain" id="PRO_1000010769" description="Elongation factor P">
    <location>
        <begin position="1"/>
        <end position="189"/>
    </location>
</feature>
<feature type="modified residue" description="N6-(3,6-diaminohexanoyl)-5-hydroxylysine" evidence="1">
    <location>
        <position position="34"/>
    </location>
</feature>
<keyword id="KW-0963">Cytoplasm</keyword>
<keyword id="KW-0251">Elongation factor</keyword>
<keyword id="KW-0379">Hydroxylation</keyword>
<keyword id="KW-0648">Protein biosynthesis</keyword>
<comment type="function">
    <text evidence="1">Involved in peptide bond synthesis. Alleviates ribosome stalling that occurs when 3 or more consecutive Pro residues or the sequence PPG is present in a protein, possibly by augmenting the peptidyl transferase activity of the ribosome. Modification of Lys-34 is required for alleviation.</text>
</comment>
<comment type="pathway">
    <text evidence="1">Protein biosynthesis; polypeptide chain elongation.</text>
</comment>
<comment type="subcellular location">
    <subcellularLocation>
        <location evidence="1">Cytoplasm</location>
    </subcellularLocation>
</comment>
<comment type="PTM">
    <text evidence="1">May be beta-lysylated on the epsilon-amino group of Lys-34 by the combined action of EpmA and EpmB, and then hydroxylated on the C5 position of the same residue by EpmC (if this protein is present). Lysylation is critical for the stimulatory effect of EF-P on peptide-bond formation. The lysylation moiety may extend toward the peptidyltransferase center and stabilize the terminal 3-CCA end of the tRNA. Hydroxylation of the C5 position on Lys-34 may allow additional potential stabilizing hydrogen-bond interactions with the P-tRNA.</text>
</comment>
<comment type="similarity">
    <text evidence="1">Belongs to the elongation factor P family.</text>
</comment>
<organism>
    <name type="scientific">Legionella pneumophila (strain Corby)</name>
    <dbReference type="NCBI Taxonomy" id="400673"/>
    <lineage>
        <taxon>Bacteria</taxon>
        <taxon>Pseudomonadati</taxon>
        <taxon>Pseudomonadota</taxon>
        <taxon>Gammaproteobacteria</taxon>
        <taxon>Legionellales</taxon>
        <taxon>Legionellaceae</taxon>
        <taxon>Legionella</taxon>
    </lineage>
</organism>
<proteinExistence type="inferred from homology"/>
<accession>A5IAG1</accession>
<sequence>MAVYSTNEFKNGLKVMVDDAPCSILDCEFVKPGKGQAFTRIKIRNLKTGRVVERTFKSGDTLPSADVADVEMQYLYNDGEYWHFMVPDTFEQYAVTENVLADAAQWLKEQDVCVLTLWNNEPIQVTPPNFVILAITETDPGLKGDTSGGGGKPATLETGAVVRVPLFVQTGELIKVDTRKGEYVSRAKE</sequence>
<name>EFP_LEGPC</name>